<feature type="transit peptide" description="Mitochondrion" evidence="1">
    <location>
        <begin position="1"/>
        <end position="26"/>
    </location>
</feature>
<feature type="chain" id="PRO_0000398295" description="Lipoyl synthase, mitochondrial">
    <location>
        <begin position="27"/>
        <end position="417"/>
    </location>
</feature>
<feature type="domain" description="Radical SAM core" evidence="2">
    <location>
        <begin position="148"/>
        <end position="369"/>
    </location>
</feature>
<feature type="region of interest" description="Disordered" evidence="3">
    <location>
        <begin position="27"/>
        <end position="61"/>
    </location>
</feature>
<feature type="region of interest" description="Disordered" evidence="3">
    <location>
        <begin position="398"/>
        <end position="417"/>
    </location>
</feature>
<feature type="compositionally biased region" description="Polar residues" evidence="3">
    <location>
        <begin position="44"/>
        <end position="58"/>
    </location>
</feature>
<feature type="binding site" evidence="1">
    <location>
        <position position="134"/>
    </location>
    <ligand>
        <name>[4Fe-4S] cluster</name>
        <dbReference type="ChEBI" id="CHEBI:49883"/>
        <label>1</label>
    </ligand>
</feature>
<feature type="binding site" evidence="1">
    <location>
        <position position="139"/>
    </location>
    <ligand>
        <name>[4Fe-4S] cluster</name>
        <dbReference type="ChEBI" id="CHEBI:49883"/>
        <label>1</label>
    </ligand>
</feature>
<feature type="binding site" evidence="1">
    <location>
        <position position="145"/>
    </location>
    <ligand>
        <name>[4Fe-4S] cluster</name>
        <dbReference type="ChEBI" id="CHEBI:49883"/>
        <label>1</label>
    </ligand>
</feature>
<feature type="binding site" evidence="1">
    <location>
        <position position="165"/>
    </location>
    <ligand>
        <name>[4Fe-4S] cluster</name>
        <dbReference type="ChEBI" id="CHEBI:49883"/>
        <label>2</label>
        <note>4Fe-4S-S-AdoMet</note>
    </ligand>
</feature>
<feature type="binding site" evidence="1">
    <location>
        <position position="169"/>
    </location>
    <ligand>
        <name>[4Fe-4S] cluster</name>
        <dbReference type="ChEBI" id="CHEBI:49883"/>
        <label>2</label>
        <note>4Fe-4S-S-AdoMet</note>
    </ligand>
</feature>
<feature type="binding site" evidence="1">
    <location>
        <position position="172"/>
    </location>
    <ligand>
        <name>[4Fe-4S] cluster</name>
        <dbReference type="ChEBI" id="CHEBI:49883"/>
        <label>2</label>
        <note>4Fe-4S-S-AdoMet</note>
    </ligand>
</feature>
<feature type="binding site" evidence="1">
    <location>
        <position position="380"/>
    </location>
    <ligand>
        <name>[4Fe-4S] cluster</name>
        <dbReference type="ChEBI" id="CHEBI:49883"/>
        <label>1</label>
    </ligand>
</feature>
<sequence length="417" mass="45521">MAVCARGLRCLGTPAVSLRLAASRSYATTTPPDPAIPNTPGAAATSSPAKRPRTSFQDKLNAGPSFSDFLSDKDDARILDPAEAYALKTALVGPKGKKKEYTRLPPWLKTSIPDSNNYKRIKNDLRGLNLHTVCEEARCPNISECWGGGSKSAATATIMLMGDTCTRGCRFCSVKTSKAPPPLDPHEPENTAEALSRWGLGYVVMTSVDRDDLPDGGARHWAETVMKIKQKAPNILVECLTGDFDGNLEMVALVAKSGLDVYAHNVETVEALTPQVRDRRAGFQKSIRVLKAAKAAQPSLITKTSMMLGLGETEEQMWDALRQLRAADIDVVTFGQYMRPTKRHMPVHEYVRPDVFEFWKEKALEMGFLYCASGPLVRSSYKAGEAFIENVLKKRRAESTGPGSASVQDVATGDLVR</sequence>
<organism>
    <name type="scientific">Uncinocarpus reesii (strain UAMH 1704)</name>
    <dbReference type="NCBI Taxonomy" id="336963"/>
    <lineage>
        <taxon>Eukaryota</taxon>
        <taxon>Fungi</taxon>
        <taxon>Dikarya</taxon>
        <taxon>Ascomycota</taxon>
        <taxon>Pezizomycotina</taxon>
        <taxon>Eurotiomycetes</taxon>
        <taxon>Eurotiomycetidae</taxon>
        <taxon>Onygenales</taxon>
        <taxon>Onygenaceae</taxon>
        <taxon>Uncinocarpus</taxon>
    </lineage>
</organism>
<gene>
    <name type="ORF">UREG_00501</name>
</gene>
<evidence type="ECO:0000255" key="1">
    <source>
        <dbReference type="HAMAP-Rule" id="MF_03123"/>
    </source>
</evidence>
<evidence type="ECO:0000255" key="2">
    <source>
        <dbReference type="PROSITE-ProRule" id="PRU01266"/>
    </source>
</evidence>
<evidence type="ECO:0000256" key="3">
    <source>
        <dbReference type="SAM" id="MobiDB-lite"/>
    </source>
</evidence>
<reference key="1">
    <citation type="journal article" date="2009" name="Genome Res.">
        <title>Comparative genomic analyses of the human fungal pathogens Coccidioides and their relatives.</title>
        <authorList>
            <person name="Sharpton T.J."/>
            <person name="Stajich J.E."/>
            <person name="Rounsley S.D."/>
            <person name="Gardner M.J."/>
            <person name="Wortman J.R."/>
            <person name="Jordar V.S."/>
            <person name="Maiti R."/>
            <person name="Kodira C.D."/>
            <person name="Neafsey D.E."/>
            <person name="Zeng Q."/>
            <person name="Hung C.-Y."/>
            <person name="McMahan C."/>
            <person name="Muszewska A."/>
            <person name="Grynberg M."/>
            <person name="Mandel M.A."/>
            <person name="Kellner E.M."/>
            <person name="Barker B.M."/>
            <person name="Galgiani J.N."/>
            <person name="Orbach M.J."/>
            <person name="Kirkland T.N."/>
            <person name="Cole G.T."/>
            <person name="Henn M.R."/>
            <person name="Birren B.W."/>
            <person name="Taylor J.W."/>
        </authorList>
    </citation>
    <scope>NUCLEOTIDE SEQUENCE [LARGE SCALE GENOMIC DNA]</scope>
    <source>
        <strain>UAMH 1704</strain>
    </source>
</reference>
<comment type="function">
    <text evidence="1">Catalyzes the radical-mediated insertion of two sulfur atoms into the C-6 and C-8 positions of the octanoyl moiety bound to the lipoyl domains of lipoate-dependent enzymes, thereby converting the octanoylated domains into lipoylated derivatives.</text>
</comment>
<comment type="catalytic activity">
    <reaction evidence="1">
        <text>[[Fe-S] cluster scaffold protein carrying a second [4Fe-4S](2+) cluster] + N(6)-octanoyl-L-lysyl-[protein] + 2 oxidized [2Fe-2S]-[ferredoxin] + 2 S-adenosyl-L-methionine + 4 H(+) = [[Fe-S] cluster scaffold protein] + N(6)-[(R)-dihydrolipoyl]-L-lysyl-[protein] + 4 Fe(3+) + 2 hydrogen sulfide + 2 5'-deoxyadenosine + 2 L-methionine + 2 reduced [2Fe-2S]-[ferredoxin]</text>
        <dbReference type="Rhea" id="RHEA:16585"/>
        <dbReference type="Rhea" id="RHEA-COMP:9928"/>
        <dbReference type="Rhea" id="RHEA-COMP:10000"/>
        <dbReference type="Rhea" id="RHEA-COMP:10001"/>
        <dbReference type="Rhea" id="RHEA-COMP:10475"/>
        <dbReference type="Rhea" id="RHEA-COMP:14568"/>
        <dbReference type="Rhea" id="RHEA-COMP:14569"/>
        <dbReference type="ChEBI" id="CHEBI:15378"/>
        <dbReference type="ChEBI" id="CHEBI:17319"/>
        <dbReference type="ChEBI" id="CHEBI:29034"/>
        <dbReference type="ChEBI" id="CHEBI:29919"/>
        <dbReference type="ChEBI" id="CHEBI:33722"/>
        <dbReference type="ChEBI" id="CHEBI:33737"/>
        <dbReference type="ChEBI" id="CHEBI:33738"/>
        <dbReference type="ChEBI" id="CHEBI:57844"/>
        <dbReference type="ChEBI" id="CHEBI:59789"/>
        <dbReference type="ChEBI" id="CHEBI:78809"/>
        <dbReference type="ChEBI" id="CHEBI:83100"/>
        <dbReference type="EC" id="2.8.1.8"/>
    </reaction>
</comment>
<comment type="cofactor">
    <cofactor evidence="1">
        <name>[4Fe-4S] cluster</name>
        <dbReference type="ChEBI" id="CHEBI:49883"/>
    </cofactor>
    <text evidence="1">Binds 2 [4Fe-4S] clusters per subunit. One cluster is coordinated with 3 cysteines and an exchangeable S-adenosyl-L-methionine.</text>
</comment>
<comment type="pathway">
    <text evidence="1">Protein modification; protein lipoylation via endogenous pathway; protein N(6)-(lipoyl)lysine from octanoyl-[acyl-carrier-protein]: step 2/2.</text>
</comment>
<comment type="subcellular location">
    <subcellularLocation>
        <location evidence="1">Mitochondrion</location>
    </subcellularLocation>
</comment>
<comment type="similarity">
    <text evidence="1">Belongs to the radical SAM superfamily. Lipoyl synthase family.</text>
</comment>
<keyword id="KW-0004">4Fe-4S</keyword>
<keyword id="KW-0408">Iron</keyword>
<keyword id="KW-0411">Iron-sulfur</keyword>
<keyword id="KW-0479">Metal-binding</keyword>
<keyword id="KW-0496">Mitochondrion</keyword>
<keyword id="KW-1185">Reference proteome</keyword>
<keyword id="KW-0949">S-adenosyl-L-methionine</keyword>
<keyword id="KW-0808">Transferase</keyword>
<keyword id="KW-0809">Transit peptide</keyword>
<proteinExistence type="inferred from homology"/>
<name>LIPA_UNCRE</name>
<accession>C4JE77</accession>
<dbReference type="EC" id="2.8.1.8" evidence="1"/>
<dbReference type="EMBL" id="CH476615">
    <property type="protein sequence ID" value="EEP75655.1"/>
    <property type="molecule type" value="Genomic_DNA"/>
</dbReference>
<dbReference type="RefSeq" id="XP_002540988.1">
    <property type="nucleotide sequence ID" value="XM_002540942.1"/>
</dbReference>
<dbReference type="SMR" id="C4JE77"/>
<dbReference type="FunCoup" id="C4JE77">
    <property type="interactions" value="514"/>
</dbReference>
<dbReference type="STRING" id="336963.C4JE77"/>
<dbReference type="GeneID" id="8437299"/>
<dbReference type="KEGG" id="ure:UREG_00501"/>
<dbReference type="VEuPathDB" id="FungiDB:UREG_00501"/>
<dbReference type="eggNOG" id="KOG2672">
    <property type="taxonomic scope" value="Eukaryota"/>
</dbReference>
<dbReference type="HOGENOM" id="CLU_033144_2_0_1"/>
<dbReference type="InParanoid" id="C4JE77"/>
<dbReference type="OMA" id="PYCDIDF"/>
<dbReference type="OrthoDB" id="3231at2759"/>
<dbReference type="UniPathway" id="UPA00538">
    <property type="reaction ID" value="UER00593"/>
</dbReference>
<dbReference type="Proteomes" id="UP000002058">
    <property type="component" value="Unassembled WGS sequence"/>
</dbReference>
<dbReference type="GO" id="GO:0005739">
    <property type="term" value="C:mitochondrion"/>
    <property type="evidence" value="ECO:0007669"/>
    <property type="project" value="UniProtKB-SubCell"/>
</dbReference>
<dbReference type="GO" id="GO:0051539">
    <property type="term" value="F:4 iron, 4 sulfur cluster binding"/>
    <property type="evidence" value="ECO:0007669"/>
    <property type="project" value="UniProtKB-UniRule"/>
</dbReference>
<dbReference type="GO" id="GO:0016992">
    <property type="term" value="F:lipoate synthase activity"/>
    <property type="evidence" value="ECO:0007669"/>
    <property type="project" value="UniProtKB-UniRule"/>
</dbReference>
<dbReference type="GO" id="GO:0046872">
    <property type="term" value="F:metal ion binding"/>
    <property type="evidence" value="ECO:0007669"/>
    <property type="project" value="UniProtKB-KW"/>
</dbReference>
<dbReference type="CDD" id="cd01335">
    <property type="entry name" value="Radical_SAM"/>
    <property type="match status" value="1"/>
</dbReference>
<dbReference type="FunFam" id="3.20.20.70:FF:000036">
    <property type="entry name" value="Lipoyl synthase, mitochondrial"/>
    <property type="match status" value="1"/>
</dbReference>
<dbReference type="Gene3D" id="3.20.20.70">
    <property type="entry name" value="Aldolase class I"/>
    <property type="match status" value="1"/>
</dbReference>
<dbReference type="HAMAP" id="MF_00206">
    <property type="entry name" value="Lipoyl_synth"/>
    <property type="match status" value="1"/>
</dbReference>
<dbReference type="InterPro" id="IPR013785">
    <property type="entry name" value="Aldolase_TIM"/>
</dbReference>
<dbReference type="InterPro" id="IPR006638">
    <property type="entry name" value="Elp3/MiaA/NifB-like_rSAM"/>
</dbReference>
<dbReference type="InterPro" id="IPR031691">
    <property type="entry name" value="LIAS_N"/>
</dbReference>
<dbReference type="InterPro" id="IPR003698">
    <property type="entry name" value="Lipoyl_synth"/>
</dbReference>
<dbReference type="InterPro" id="IPR007197">
    <property type="entry name" value="rSAM"/>
</dbReference>
<dbReference type="NCBIfam" id="TIGR00510">
    <property type="entry name" value="lipA"/>
    <property type="match status" value="1"/>
</dbReference>
<dbReference type="NCBIfam" id="NF004019">
    <property type="entry name" value="PRK05481.1"/>
    <property type="match status" value="1"/>
</dbReference>
<dbReference type="NCBIfam" id="NF009544">
    <property type="entry name" value="PRK12928.1"/>
    <property type="match status" value="1"/>
</dbReference>
<dbReference type="PANTHER" id="PTHR10949">
    <property type="entry name" value="LIPOYL SYNTHASE"/>
    <property type="match status" value="1"/>
</dbReference>
<dbReference type="PANTHER" id="PTHR10949:SF0">
    <property type="entry name" value="LIPOYL SYNTHASE, MITOCHONDRIAL"/>
    <property type="match status" value="1"/>
</dbReference>
<dbReference type="Pfam" id="PF16881">
    <property type="entry name" value="LIAS_N"/>
    <property type="match status" value="1"/>
</dbReference>
<dbReference type="Pfam" id="PF04055">
    <property type="entry name" value="Radical_SAM"/>
    <property type="match status" value="1"/>
</dbReference>
<dbReference type="SFLD" id="SFLDF00271">
    <property type="entry name" value="lipoyl_synthase"/>
    <property type="match status" value="1"/>
</dbReference>
<dbReference type="SFLD" id="SFLDG01058">
    <property type="entry name" value="lipoyl_synthase_like"/>
    <property type="match status" value="1"/>
</dbReference>
<dbReference type="SMART" id="SM00729">
    <property type="entry name" value="Elp3"/>
    <property type="match status" value="1"/>
</dbReference>
<dbReference type="SUPFAM" id="SSF102114">
    <property type="entry name" value="Radical SAM enzymes"/>
    <property type="match status" value="1"/>
</dbReference>
<dbReference type="PROSITE" id="PS51918">
    <property type="entry name" value="RADICAL_SAM"/>
    <property type="match status" value="1"/>
</dbReference>
<protein>
    <recommendedName>
        <fullName evidence="1">Lipoyl synthase, mitochondrial</fullName>
        <ecNumber evidence="1">2.8.1.8</ecNumber>
    </recommendedName>
    <alternativeName>
        <fullName evidence="1">Lipoate synthase</fullName>
        <shortName evidence="1">LS</shortName>
        <shortName evidence="1">Lip-syn</shortName>
    </alternativeName>
    <alternativeName>
        <fullName evidence="1">Lipoic acid synthase</fullName>
    </alternativeName>
</protein>